<keyword id="KW-1185">Reference proteome</keyword>
<protein>
    <recommendedName>
        <fullName>Uncharacterized protein Rv2568c</fullName>
    </recommendedName>
</protein>
<gene>
    <name type="ordered locus">Rv2568c</name>
    <name type="ORF">MTCY227.33</name>
</gene>
<feature type="chain" id="PRO_0000104045" description="Uncharacterized protein Rv2568c">
    <location>
        <begin position="1"/>
        <end position="341"/>
    </location>
</feature>
<dbReference type="EMBL" id="AL123456">
    <property type="protein sequence ID" value="CCP45364.1"/>
    <property type="molecule type" value="Genomic_DNA"/>
</dbReference>
<dbReference type="PIR" id="G70723">
    <property type="entry name" value="G70723"/>
</dbReference>
<dbReference type="RefSeq" id="NP_217084.1">
    <property type="nucleotide sequence ID" value="NC_000962.3"/>
</dbReference>
<dbReference type="RefSeq" id="WP_003413332.1">
    <property type="nucleotide sequence ID" value="NZ_NVQJ01000023.1"/>
</dbReference>
<dbReference type="STRING" id="83332.Rv2568c"/>
<dbReference type="PaxDb" id="83332-Rv2568c"/>
<dbReference type="DNASU" id="887249"/>
<dbReference type="GeneID" id="887249"/>
<dbReference type="KEGG" id="mtu:Rv2568c"/>
<dbReference type="KEGG" id="mtv:RVBD_2568c"/>
<dbReference type="TubercuList" id="Rv2568c"/>
<dbReference type="eggNOG" id="COG4307">
    <property type="taxonomic scope" value="Bacteria"/>
</dbReference>
<dbReference type="InParanoid" id="P9WL95"/>
<dbReference type="OrthoDB" id="256753at2"/>
<dbReference type="PhylomeDB" id="P9WL95"/>
<dbReference type="Proteomes" id="UP000001584">
    <property type="component" value="Chromosome"/>
</dbReference>
<dbReference type="Gene3D" id="3.40.390.70">
    <property type="match status" value="1"/>
</dbReference>
<dbReference type="InterPro" id="IPR031321">
    <property type="entry name" value="UCP012641"/>
</dbReference>
<dbReference type="InterPro" id="IPR011201">
    <property type="entry name" value="Zinc-ribbon_6_bact"/>
</dbReference>
<dbReference type="Pfam" id="PF15887">
    <property type="entry name" value="Peptidase_Mx"/>
    <property type="match status" value="1"/>
</dbReference>
<dbReference type="Pfam" id="PF10005">
    <property type="entry name" value="Zn_ribbon_DZR_6"/>
    <property type="match status" value="1"/>
</dbReference>
<dbReference type="PIRSF" id="PIRSF012641">
    <property type="entry name" value="UCP012641"/>
    <property type="match status" value="1"/>
</dbReference>
<accession>P9WL95</accession>
<accession>L0TBM7</accession>
<accession>P65009</accession>
<accession>Q50653</accession>
<name>Y2568_MYCTU</name>
<reference key="1">
    <citation type="journal article" date="1998" name="Nature">
        <title>Deciphering the biology of Mycobacterium tuberculosis from the complete genome sequence.</title>
        <authorList>
            <person name="Cole S.T."/>
            <person name="Brosch R."/>
            <person name="Parkhill J."/>
            <person name="Garnier T."/>
            <person name="Churcher C.M."/>
            <person name="Harris D.E."/>
            <person name="Gordon S.V."/>
            <person name="Eiglmeier K."/>
            <person name="Gas S."/>
            <person name="Barry C.E. III"/>
            <person name="Tekaia F."/>
            <person name="Badcock K."/>
            <person name="Basham D."/>
            <person name="Brown D."/>
            <person name="Chillingworth T."/>
            <person name="Connor R."/>
            <person name="Davies R.M."/>
            <person name="Devlin K."/>
            <person name="Feltwell T."/>
            <person name="Gentles S."/>
            <person name="Hamlin N."/>
            <person name="Holroyd S."/>
            <person name="Hornsby T."/>
            <person name="Jagels K."/>
            <person name="Krogh A."/>
            <person name="McLean J."/>
            <person name="Moule S."/>
            <person name="Murphy L.D."/>
            <person name="Oliver S."/>
            <person name="Osborne J."/>
            <person name="Quail M.A."/>
            <person name="Rajandream M.A."/>
            <person name="Rogers J."/>
            <person name="Rutter S."/>
            <person name="Seeger K."/>
            <person name="Skelton S."/>
            <person name="Squares S."/>
            <person name="Squares R."/>
            <person name="Sulston J.E."/>
            <person name="Taylor K."/>
            <person name="Whitehead S."/>
            <person name="Barrell B.G."/>
        </authorList>
    </citation>
    <scope>NUCLEOTIDE SEQUENCE [LARGE SCALE GENOMIC DNA]</scope>
    <source>
        <strain>ATCC 25618 / H37Rv</strain>
    </source>
</reference>
<reference key="2">
    <citation type="journal article" date="2011" name="Mol. Cell. Proteomics">
        <title>Proteogenomic analysis of Mycobacterium tuberculosis by high resolution mass spectrometry.</title>
        <authorList>
            <person name="Kelkar D.S."/>
            <person name="Kumar D."/>
            <person name="Kumar P."/>
            <person name="Balakrishnan L."/>
            <person name="Muthusamy B."/>
            <person name="Yadav A.K."/>
            <person name="Shrivastava P."/>
            <person name="Marimuthu A."/>
            <person name="Anand S."/>
            <person name="Sundaram H."/>
            <person name="Kingsbury R."/>
            <person name="Harsha H.C."/>
            <person name="Nair B."/>
            <person name="Prasad T.S."/>
            <person name="Chauhan D.S."/>
            <person name="Katoch K."/>
            <person name="Katoch V.M."/>
            <person name="Kumar P."/>
            <person name="Chaerkady R."/>
            <person name="Ramachandran S."/>
            <person name="Dash D."/>
            <person name="Pandey A."/>
        </authorList>
    </citation>
    <scope>IDENTIFICATION BY MASS SPECTROMETRY [LARGE SCALE ANALYSIS]</scope>
    <source>
        <strain>ATCC 25618 / H37Rv</strain>
    </source>
</reference>
<sequence>MRDFHCPNCGQRLAFENSACLSCGSALGFSLGRMALLVIADDADVQLCANLHLAQCNWLVPSDQLGGLCSSCVLTIERPSDTNTAGLAEFARAEGAKRRLIAELHELKLPIVGRDQDPDHGLAFRLLSSAHENVTTGHQNGVITLDLAEGDDVHREQLRVEMDEPYRTLLGHFRHEIGHYYFYRLIASSSDYLSRFNELFGDPDADYSQALDRHYRGGPPEGWQDSFVSSYATMHASEDWAETFAHYLHIRDALDTAAWCGLAPASATFDRPALGPSAFNTIIDKWLPLSWSLNMVNRSMGHDDLYPFVLPAAVLEKMRFIHTVVDEVAPDFEPAHSRRTV</sequence>
<proteinExistence type="evidence at protein level"/>
<organism>
    <name type="scientific">Mycobacterium tuberculosis (strain ATCC 25618 / H37Rv)</name>
    <dbReference type="NCBI Taxonomy" id="83332"/>
    <lineage>
        <taxon>Bacteria</taxon>
        <taxon>Bacillati</taxon>
        <taxon>Actinomycetota</taxon>
        <taxon>Actinomycetes</taxon>
        <taxon>Mycobacteriales</taxon>
        <taxon>Mycobacteriaceae</taxon>
        <taxon>Mycobacterium</taxon>
        <taxon>Mycobacterium tuberculosis complex</taxon>
    </lineage>
</organism>